<name>HES3_RAT</name>
<feature type="chain" id="PRO_0000127210" description="Transcription factor HES-3">
    <location>
        <begin position="1"/>
        <end position="175"/>
    </location>
</feature>
<feature type="domain" description="bHLH" evidence="3">
    <location>
        <begin position="1"/>
        <end position="49"/>
    </location>
</feature>
<feature type="domain" description="Orange" evidence="2">
    <location>
        <begin position="65"/>
        <end position="98"/>
    </location>
</feature>
<feature type="region of interest" description="Disordered" evidence="4">
    <location>
        <begin position="124"/>
        <end position="175"/>
    </location>
</feature>
<feature type="short sequence motif" description="WRPW motif">
    <location>
        <begin position="172"/>
        <end position="175"/>
    </location>
</feature>
<feature type="compositionally biased region" description="Low complexity" evidence="4">
    <location>
        <begin position="124"/>
        <end position="145"/>
    </location>
</feature>
<proteinExistence type="evidence at transcript level"/>
<gene>
    <name type="primary">Hes3</name>
    <name type="synonym">Hes-3</name>
</gene>
<evidence type="ECO:0000250" key="1"/>
<evidence type="ECO:0000255" key="2">
    <source>
        <dbReference type="PROSITE-ProRule" id="PRU00380"/>
    </source>
</evidence>
<evidence type="ECO:0000255" key="3">
    <source>
        <dbReference type="PROSITE-ProRule" id="PRU00981"/>
    </source>
</evidence>
<evidence type="ECO:0000256" key="4">
    <source>
        <dbReference type="SAM" id="MobiDB-lite"/>
    </source>
</evidence>
<comment type="function">
    <text>Transcriptional repressor of genes that require a bHLH protein for their transcription.</text>
</comment>
<comment type="subunit">
    <text evidence="1">Transcription repression requires formation of a complex with a corepressor protein of the Groucho/TLE family.</text>
</comment>
<comment type="subcellular location">
    <subcellularLocation>
        <location>Nucleus</location>
    </subcellularLocation>
</comment>
<comment type="tissue specificity">
    <text>Expressed exclusively in Purkinje cells.</text>
</comment>
<comment type="domain">
    <text>Has a particular type of basic domain (presence of a helix-interrupting proline) that binds to the N-box (CACNAG), rather than the canonical E-box (CANNTG).</text>
</comment>
<comment type="domain">
    <text evidence="1">The C-terminal WRPW motif is a transcriptional repression domain necessary for the interaction with Groucho/TLE family members, transcriptional corepressors recruited to specific target DNA by Hairy-related proteins.</text>
</comment>
<keyword id="KW-0238">DNA-binding</keyword>
<keyword id="KW-0539">Nucleus</keyword>
<keyword id="KW-1185">Reference proteome</keyword>
<keyword id="KW-0678">Repressor</keyword>
<keyword id="KW-0804">Transcription</keyword>
<keyword id="KW-0805">Transcription regulation</keyword>
<organism>
    <name type="scientific">Rattus norvegicus</name>
    <name type="common">Rat</name>
    <dbReference type="NCBI Taxonomy" id="10116"/>
    <lineage>
        <taxon>Eukaryota</taxon>
        <taxon>Metazoa</taxon>
        <taxon>Chordata</taxon>
        <taxon>Craniata</taxon>
        <taxon>Vertebrata</taxon>
        <taxon>Euteleostomi</taxon>
        <taxon>Mammalia</taxon>
        <taxon>Eutheria</taxon>
        <taxon>Euarchontoglires</taxon>
        <taxon>Glires</taxon>
        <taxon>Rodentia</taxon>
        <taxon>Myomorpha</taxon>
        <taxon>Muroidea</taxon>
        <taxon>Muridae</taxon>
        <taxon>Murinae</taxon>
        <taxon>Rattus</taxon>
    </lineage>
</organism>
<sequence>MEKKRRARINLSLEQLRSLLERHYSHQIRKRKLEKADILELSVKYVRSLQNSLQGLWLVPSGVDYPSGFRGGLPGSSQRLRPGEDDSGLRCPLLLQRRAGSTTDSANPQTASVLSPCLPAIWAPGPPAGGSQSPQSPFPPLGGLLESSTGILAPPPASNCQAENPRPGFRVWRPW</sequence>
<protein>
    <recommendedName>
        <fullName>Transcription factor HES-3</fullName>
    </recommendedName>
    <alternativeName>
        <fullName>Hairy and enhancer of split 3</fullName>
    </alternativeName>
</protein>
<dbReference type="EMBL" id="D13418">
    <property type="protein sequence ID" value="BAA02683.1"/>
    <property type="molecule type" value="mRNA"/>
</dbReference>
<dbReference type="PIR" id="S36749">
    <property type="entry name" value="S36749"/>
</dbReference>
<dbReference type="RefSeq" id="NP_001417027.1">
    <property type="nucleotide sequence ID" value="NM_001430098.1"/>
</dbReference>
<dbReference type="RefSeq" id="NP_001417028.1">
    <property type="nucleotide sequence ID" value="NM_001430099.1"/>
</dbReference>
<dbReference type="RefSeq" id="NP_001417029.1">
    <property type="nucleotide sequence ID" value="NM_001430100.1"/>
</dbReference>
<dbReference type="RefSeq" id="NP_073178.1">
    <property type="nucleotide sequence ID" value="NM_022687.3"/>
</dbReference>
<dbReference type="RefSeq" id="XP_008762603.1">
    <property type="nucleotide sequence ID" value="XM_008764381.2"/>
</dbReference>
<dbReference type="RefSeq" id="XP_008762604.1">
    <property type="nucleotide sequence ID" value="XM_008764382.2"/>
</dbReference>
<dbReference type="RefSeq" id="XP_008762605.1">
    <property type="nucleotide sequence ID" value="XM_008764383.1"/>
</dbReference>
<dbReference type="RefSeq" id="XP_017449101.1">
    <property type="nucleotide sequence ID" value="XM_017593612.1"/>
</dbReference>
<dbReference type="RefSeq" id="XP_017449102.1">
    <property type="nucleotide sequence ID" value="XM_017593613.1"/>
</dbReference>
<dbReference type="RefSeq" id="XP_017449103.1">
    <property type="nucleotide sequence ID" value="XM_017593614.1"/>
</dbReference>
<dbReference type="SMR" id="Q04667"/>
<dbReference type="ELM" id="Q04667"/>
<dbReference type="FunCoup" id="Q04667">
    <property type="interactions" value="39"/>
</dbReference>
<dbReference type="STRING" id="10116.ENSRNOP00000014535"/>
<dbReference type="PaxDb" id="10116-ENSRNOP00000014535"/>
<dbReference type="Ensembl" id="ENSRNOT00000014536.4">
    <property type="protein sequence ID" value="ENSRNOP00000014535.1"/>
    <property type="gene ID" value="ENSRNOG00000010893.6"/>
</dbReference>
<dbReference type="GeneID" id="64628"/>
<dbReference type="KEGG" id="rno:64628"/>
<dbReference type="AGR" id="RGD:621339"/>
<dbReference type="CTD" id="390992"/>
<dbReference type="RGD" id="621339">
    <property type="gene designation" value="Hes3"/>
</dbReference>
<dbReference type="eggNOG" id="KOG4304">
    <property type="taxonomic scope" value="Eukaryota"/>
</dbReference>
<dbReference type="GeneTree" id="ENSGT00730000111482"/>
<dbReference type="HOGENOM" id="CLU_068550_4_0_1"/>
<dbReference type="InParanoid" id="Q04667"/>
<dbReference type="OMA" id="LRCPLAH"/>
<dbReference type="OrthoDB" id="87035at9989"/>
<dbReference type="PhylomeDB" id="Q04667"/>
<dbReference type="TreeFam" id="TF351373"/>
<dbReference type="PRO" id="PR:Q04667"/>
<dbReference type="Proteomes" id="UP000002494">
    <property type="component" value="Chromosome 5"/>
</dbReference>
<dbReference type="Bgee" id="ENSRNOG00000010893">
    <property type="expression patterns" value="Expressed in cerebellum"/>
</dbReference>
<dbReference type="GO" id="GO:0005634">
    <property type="term" value="C:nucleus"/>
    <property type="evidence" value="ECO:0000318"/>
    <property type="project" value="GO_Central"/>
</dbReference>
<dbReference type="GO" id="GO:0001227">
    <property type="term" value="F:DNA-binding transcription repressor activity, RNA polymerase II-specific"/>
    <property type="evidence" value="ECO:0000266"/>
    <property type="project" value="RGD"/>
</dbReference>
<dbReference type="GO" id="GO:0046983">
    <property type="term" value="F:protein dimerization activity"/>
    <property type="evidence" value="ECO:0007669"/>
    <property type="project" value="InterPro"/>
</dbReference>
<dbReference type="GO" id="GO:0000978">
    <property type="term" value="F:RNA polymerase II cis-regulatory region sequence-specific DNA binding"/>
    <property type="evidence" value="ECO:0000266"/>
    <property type="project" value="RGD"/>
</dbReference>
<dbReference type="GO" id="GO:0021575">
    <property type="term" value="P:hindbrain morphogenesis"/>
    <property type="evidence" value="ECO:0000266"/>
    <property type="project" value="RGD"/>
</dbReference>
<dbReference type="GO" id="GO:0001701">
    <property type="term" value="P:in utero embryonic development"/>
    <property type="evidence" value="ECO:0000266"/>
    <property type="project" value="RGD"/>
</dbReference>
<dbReference type="GO" id="GO:0030901">
    <property type="term" value="P:midbrain development"/>
    <property type="evidence" value="ECO:0000266"/>
    <property type="project" value="RGD"/>
</dbReference>
<dbReference type="GO" id="GO:0021555">
    <property type="term" value="P:midbrain-hindbrain boundary morphogenesis"/>
    <property type="evidence" value="ECO:0000266"/>
    <property type="project" value="RGD"/>
</dbReference>
<dbReference type="GO" id="GO:0045892">
    <property type="term" value="P:negative regulation of DNA-templated transcription"/>
    <property type="evidence" value="ECO:0000314"/>
    <property type="project" value="RGD"/>
</dbReference>
<dbReference type="GO" id="GO:0000122">
    <property type="term" value="P:negative regulation of transcription by RNA polymerase II"/>
    <property type="evidence" value="ECO:0000266"/>
    <property type="project" value="RGD"/>
</dbReference>
<dbReference type="GO" id="GO:0021915">
    <property type="term" value="P:neural tube development"/>
    <property type="evidence" value="ECO:0000266"/>
    <property type="project" value="RGD"/>
</dbReference>
<dbReference type="GO" id="GO:0021557">
    <property type="term" value="P:oculomotor nerve development"/>
    <property type="evidence" value="ECO:0000266"/>
    <property type="project" value="RGD"/>
</dbReference>
<dbReference type="GO" id="GO:0045944">
    <property type="term" value="P:positive regulation of transcription by RNA polymerase II"/>
    <property type="evidence" value="ECO:0000266"/>
    <property type="project" value="RGD"/>
</dbReference>
<dbReference type="GO" id="GO:0050767">
    <property type="term" value="P:regulation of neurogenesis"/>
    <property type="evidence" value="ECO:0000266"/>
    <property type="project" value="RGD"/>
</dbReference>
<dbReference type="GO" id="GO:0060164">
    <property type="term" value="P:regulation of timing of neuron differentiation"/>
    <property type="evidence" value="ECO:0000266"/>
    <property type="project" value="RGD"/>
</dbReference>
<dbReference type="GO" id="GO:0006366">
    <property type="term" value="P:transcription by RNA polymerase II"/>
    <property type="evidence" value="ECO:0000266"/>
    <property type="project" value="RGD"/>
</dbReference>
<dbReference type="GO" id="GO:0021558">
    <property type="term" value="P:trochlear nerve development"/>
    <property type="evidence" value="ECO:0000266"/>
    <property type="project" value="RGD"/>
</dbReference>
<dbReference type="CDD" id="cd18933">
    <property type="entry name" value="bHLH-O_HES3"/>
    <property type="match status" value="1"/>
</dbReference>
<dbReference type="Gene3D" id="4.10.280.10">
    <property type="entry name" value="Helix-loop-helix DNA-binding domain"/>
    <property type="match status" value="1"/>
</dbReference>
<dbReference type="InterPro" id="IPR011598">
    <property type="entry name" value="bHLH_dom"/>
</dbReference>
<dbReference type="InterPro" id="IPR050370">
    <property type="entry name" value="HES_HEY"/>
</dbReference>
<dbReference type="InterPro" id="IPR036638">
    <property type="entry name" value="HLH_DNA-bd_sf"/>
</dbReference>
<dbReference type="InterPro" id="IPR003650">
    <property type="entry name" value="Orange_dom"/>
</dbReference>
<dbReference type="PANTHER" id="PTHR10985">
    <property type="entry name" value="BASIC HELIX-LOOP-HELIX TRANSCRIPTION FACTOR, HES-RELATED"/>
    <property type="match status" value="1"/>
</dbReference>
<dbReference type="Pfam" id="PF00010">
    <property type="entry name" value="HLH"/>
    <property type="match status" value="1"/>
</dbReference>
<dbReference type="SMART" id="SM00353">
    <property type="entry name" value="HLH"/>
    <property type="match status" value="1"/>
</dbReference>
<dbReference type="SUPFAM" id="SSF47459">
    <property type="entry name" value="HLH, helix-loop-helix DNA-binding domain"/>
    <property type="match status" value="1"/>
</dbReference>
<dbReference type="PROSITE" id="PS50888">
    <property type="entry name" value="BHLH"/>
    <property type="match status" value="1"/>
</dbReference>
<dbReference type="PROSITE" id="PS51054">
    <property type="entry name" value="ORANGE"/>
    <property type="match status" value="1"/>
</dbReference>
<accession>Q04667</accession>
<reference key="1">
    <citation type="journal article" date="1992" name="Genes Dev.">
        <title>Two mammalian helix-loop-helix factors structurally related to Drosophila hairy and Enhancer of split.</title>
        <authorList>
            <person name="Sasai Y."/>
            <person name="Kageyama R."/>
            <person name="Tagawa Y."/>
            <person name="Shigemoto R."/>
            <person name="Nakanishi S."/>
        </authorList>
    </citation>
    <scope>NUCLEOTIDE SEQUENCE [MRNA]</scope>
    <source>
        <strain>Sprague-Dawley</strain>
        <tissue>Brain</tissue>
    </source>
</reference>